<feature type="chain" id="PRO_0000221848" description="Hexon-interlacing protein" evidence="1">
    <location>
        <begin position="1"/>
        <end position="144"/>
    </location>
</feature>
<feature type="coiled-coil region" evidence="1">
    <location>
        <begin position="106"/>
        <end position="133"/>
    </location>
</feature>
<protein>
    <recommendedName>
        <fullName evidence="1">Hexon-interlacing protein</fullName>
    </recommendedName>
    <alternativeName>
        <fullName evidence="1">Protein IX</fullName>
    </alternativeName>
</protein>
<accession>P03284</accession>
<organismHost>
    <name type="scientific">Homo sapiens</name>
    <name type="common">Human</name>
    <dbReference type="NCBI Taxonomy" id="9606"/>
</organismHost>
<gene>
    <name evidence="1" type="primary">IX</name>
</gene>
<name>CAP9_ADE12</name>
<dbReference type="EMBL" id="V00004">
    <property type="protein sequence ID" value="CAA23411.1"/>
    <property type="molecule type" value="Genomic_DNA"/>
</dbReference>
<dbReference type="EMBL" id="M55003">
    <property type="protein sequence ID" value="AAA42500.1"/>
    <property type="molecule type" value="Genomic_DNA"/>
</dbReference>
<dbReference type="EMBL" id="X73487">
    <property type="protein sequence ID" value="CAA51880.1"/>
    <property type="molecule type" value="Genomic_DNA"/>
</dbReference>
<dbReference type="PIR" id="A90814">
    <property type="entry name" value="SXAD12"/>
</dbReference>
<dbReference type="RefSeq" id="NP_040913.1">
    <property type="nucleotide sequence ID" value="NC_001460.1"/>
</dbReference>
<dbReference type="GeneID" id="1460846"/>
<dbReference type="KEGG" id="vg:1460846"/>
<dbReference type="Proteomes" id="UP000004993">
    <property type="component" value="Genome"/>
</dbReference>
<dbReference type="GO" id="GO:0042025">
    <property type="term" value="C:host cell nucleus"/>
    <property type="evidence" value="ECO:0007669"/>
    <property type="project" value="UniProtKB-SubCell"/>
</dbReference>
<dbReference type="GO" id="GO:0098021">
    <property type="term" value="C:viral capsid, decoration"/>
    <property type="evidence" value="ECO:0007669"/>
    <property type="project" value="UniProtKB-UniRule"/>
</dbReference>
<dbReference type="GO" id="GO:0031423">
    <property type="term" value="F:hexon binding"/>
    <property type="evidence" value="ECO:0007669"/>
    <property type="project" value="InterPro"/>
</dbReference>
<dbReference type="GO" id="GO:0046718">
    <property type="term" value="P:symbiont entry into host cell"/>
    <property type="evidence" value="ECO:0007669"/>
    <property type="project" value="UniProtKB-UniRule"/>
</dbReference>
<dbReference type="Gene3D" id="6.10.250.3040">
    <property type="match status" value="1"/>
</dbReference>
<dbReference type="HAMAP" id="MF_04050">
    <property type="entry name" value="ADV_CAP9"/>
    <property type="match status" value="1"/>
</dbReference>
<dbReference type="InterPro" id="IPR005641">
    <property type="entry name" value="Hexon_assoc_IX"/>
</dbReference>
<dbReference type="Pfam" id="PF03955">
    <property type="entry name" value="Adeno_PIX"/>
    <property type="match status" value="1"/>
</dbReference>
<organism>
    <name type="scientific">Human adenovirus A serotype 12</name>
    <name type="common">HAdV-12</name>
    <name type="synonym">Human adenovirus 12</name>
    <dbReference type="NCBI Taxonomy" id="28282"/>
    <lineage>
        <taxon>Viruses</taxon>
        <taxon>Varidnaviria</taxon>
        <taxon>Bamfordvirae</taxon>
        <taxon>Preplasmiviricota</taxon>
        <taxon>Tectiliviricetes</taxon>
        <taxon>Rowavirales</taxon>
        <taxon>Adenoviridae</taxon>
        <taxon>Mastadenovirus</taxon>
        <taxon>Human mastadenovirus A</taxon>
    </lineage>
</organism>
<sequence>MNGTTQNNAALFDGGVFSPYLTSRLPYWAGVRQNVVGSTVDGRPVAPANSSTLTYATIGPSPLDTAAAAAASAAASTARSMAADFSFYNHLASNAVTRTAVREDILTVMLAKLETLTAQLEELSQKVEELADATTHTPAQPVTQ</sequence>
<keyword id="KW-1232">Capsid decoration protein</keyword>
<keyword id="KW-0167">Capsid protein</keyword>
<keyword id="KW-0175">Coiled coil</keyword>
<keyword id="KW-1048">Host nucleus</keyword>
<keyword id="KW-0945">Host-virus interaction</keyword>
<keyword id="KW-1185">Reference proteome</keyword>
<keyword id="KW-0946">Virion</keyword>
<keyword id="KW-1160">Virus entry into host cell</keyword>
<comment type="function">
    <text evidence="1">Structural component of the virion that acts as a cement protein on the capsid exterior and forms triskelion structures consisting of three molecules that stabilize three hexon trimers at the center of each icosahedral facet and fixes the peripentonal hexons. Dispensable for assembly. During virus entry, recruits the anterograde motor kinesin-1 to the capsid docked at the nuclear pore complex thereby subjecting the docked capsid to a pulling force. The resulting tension leads to capsid disruption, dispersion of capsid fragments toward cell periphery and eventually viral DNA entry into the host nucleus.</text>
</comment>
<comment type="subunit">
    <text evidence="1">Homotrimer. Interacts with hexon protein; this interaction tethers the hexons together. Self-interacts with adjacent proteins. Interacts with kinesin light chain KLC1; this interaction leads to capsid disruption at the nuclear pore complex during virus entry into host cell.</text>
</comment>
<comment type="subcellular location">
    <subcellularLocation>
        <location evidence="1">Virion</location>
    </subcellularLocation>
    <subcellularLocation>
        <location evidence="1">Host nucleus</location>
    </subcellularLocation>
    <text evidence="1">Located in the canyons between the hexons on the outer surface of the capsid. Forms a sort of hairnet on the outer side of the virion. Present in 240 copies per virion.</text>
</comment>
<comment type="induction">
    <text evidence="1">Expressed in the intermediate phase of the viral replicative cycle.</text>
</comment>
<comment type="domain">
    <text evidence="1">Three N-terminal domains of hexon-interlacing protein form triskelions between hexon capsomers.</text>
</comment>
<comment type="miscellaneous">
    <text evidence="1">This protein is only encoded by mastadenoviruses, and may therefore play a role in mammals tropism.</text>
</comment>
<comment type="similarity">
    <text evidence="1 2">Belongs to the adenoviridae hexon-interlacing protein family.</text>
</comment>
<proteinExistence type="inferred from homology"/>
<reference key="1">
    <citation type="journal article" date="1981" name="Cell">
        <title>The 2.2 kb E1b mRNA of human Ad12 and Ad5 codes for two tumor antigens starting at different AUG triplets.</title>
        <authorList>
            <person name="Bos J.L."/>
            <person name="Polder L.J."/>
            <person name="Bernards R."/>
            <person name="Schrier P.I."/>
            <person name="van den Elsen P.J."/>
            <person name="van der Eb A.J."/>
            <person name="van Ormondt H."/>
        </authorList>
    </citation>
    <scope>NUCLEOTIDE SEQUENCE [GENOMIC DNA]</scope>
</reference>
<reference key="2">
    <citation type="journal article" date="1981" name="Nucleic Acids Res.">
        <title>Nucleotide sequence of the transforming early region E1b of adenovirus type 12 DNA: structure and gene organization, and comparison with those of adenovirus type 5 DNA.</title>
        <authorList>
            <person name="Kimura T."/>
            <person name="Sawada Y."/>
            <person name="Shinawawa M."/>
            <person name="Shimizu Y."/>
            <person name="Shiroki K."/>
            <person name="Shimojo H."/>
            <person name="Sugisaki H."/>
            <person name="Takanami M."/>
            <person name="Uemizu Y."/>
            <person name="Fujinaga K."/>
        </authorList>
    </citation>
    <scope>NUCLEOTIDE SEQUENCE [GENOMIC DNA]</scope>
</reference>
<reference key="3">
    <citation type="journal article" date="1983" name="Sapporo Igaku Zasshi">
        <title>Structure and sequence analysis of the transforming region E1B of human adenovirus type 12.</title>
        <authorList>
            <person name="Kimura T."/>
        </authorList>
    </citation>
    <scope>NUCLEOTIDE SEQUENCE [GENOMIC DNA]</scope>
</reference>
<reference key="4">
    <citation type="journal article" date="1994" name="J. Virol.">
        <title>Nucleotide sequence of human adenovirus type 12 DNA: comparative functional analysis.</title>
        <authorList>
            <person name="Sprengel J."/>
            <person name="Schmitz B."/>
            <person name="Heuss-Neitzel D."/>
            <person name="Zock C."/>
            <person name="Doerfler W."/>
        </authorList>
    </citation>
    <scope>NUCLEOTIDE SEQUENCE [LARGE SCALE GENOMIC DNA]</scope>
</reference>
<evidence type="ECO:0000255" key="1">
    <source>
        <dbReference type="HAMAP-Rule" id="MF_04050"/>
    </source>
</evidence>
<evidence type="ECO:0000305" key="2"/>